<keyword id="KW-0687">Ribonucleoprotein</keyword>
<keyword id="KW-0689">Ribosomal protein</keyword>
<feature type="chain" id="PRO_1000120662" description="Small ribosomal subunit protein bS21">
    <location>
        <begin position="1"/>
        <end position="71"/>
    </location>
</feature>
<dbReference type="EMBL" id="CP000472">
    <property type="protein sequence ID" value="ACJ27912.1"/>
    <property type="molecule type" value="Genomic_DNA"/>
</dbReference>
<dbReference type="RefSeq" id="WP_020911290.1">
    <property type="nucleotide sequence ID" value="NC_011566.1"/>
</dbReference>
<dbReference type="SMR" id="B8CJF0"/>
<dbReference type="STRING" id="225849.swp_1114"/>
<dbReference type="KEGG" id="swp:swp_1114"/>
<dbReference type="eggNOG" id="COG0828">
    <property type="taxonomic scope" value="Bacteria"/>
</dbReference>
<dbReference type="HOGENOM" id="CLU_159258_1_0_6"/>
<dbReference type="OrthoDB" id="9799244at2"/>
<dbReference type="Proteomes" id="UP000000753">
    <property type="component" value="Chromosome"/>
</dbReference>
<dbReference type="GO" id="GO:1990904">
    <property type="term" value="C:ribonucleoprotein complex"/>
    <property type="evidence" value="ECO:0007669"/>
    <property type="project" value="UniProtKB-KW"/>
</dbReference>
<dbReference type="GO" id="GO:0005840">
    <property type="term" value="C:ribosome"/>
    <property type="evidence" value="ECO:0007669"/>
    <property type="project" value="UniProtKB-KW"/>
</dbReference>
<dbReference type="GO" id="GO:0003735">
    <property type="term" value="F:structural constituent of ribosome"/>
    <property type="evidence" value="ECO:0007669"/>
    <property type="project" value="InterPro"/>
</dbReference>
<dbReference type="GO" id="GO:0006412">
    <property type="term" value="P:translation"/>
    <property type="evidence" value="ECO:0007669"/>
    <property type="project" value="UniProtKB-UniRule"/>
</dbReference>
<dbReference type="Gene3D" id="1.20.5.1150">
    <property type="entry name" value="Ribosomal protein S8"/>
    <property type="match status" value="1"/>
</dbReference>
<dbReference type="HAMAP" id="MF_00358">
    <property type="entry name" value="Ribosomal_bS21"/>
    <property type="match status" value="1"/>
</dbReference>
<dbReference type="InterPro" id="IPR001911">
    <property type="entry name" value="Ribosomal_bS21"/>
</dbReference>
<dbReference type="InterPro" id="IPR018278">
    <property type="entry name" value="Ribosomal_bS21_CS"/>
</dbReference>
<dbReference type="InterPro" id="IPR038380">
    <property type="entry name" value="Ribosomal_bS21_sf"/>
</dbReference>
<dbReference type="NCBIfam" id="TIGR00030">
    <property type="entry name" value="S21p"/>
    <property type="match status" value="1"/>
</dbReference>
<dbReference type="PANTHER" id="PTHR21109">
    <property type="entry name" value="MITOCHONDRIAL 28S RIBOSOMAL PROTEIN S21"/>
    <property type="match status" value="1"/>
</dbReference>
<dbReference type="PANTHER" id="PTHR21109:SF22">
    <property type="entry name" value="SMALL RIBOSOMAL SUBUNIT PROTEIN BS21"/>
    <property type="match status" value="1"/>
</dbReference>
<dbReference type="Pfam" id="PF01165">
    <property type="entry name" value="Ribosomal_S21"/>
    <property type="match status" value="1"/>
</dbReference>
<dbReference type="PRINTS" id="PR00976">
    <property type="entry name" value="RIBOSOMALS21"/>
</dbReference>
<dbReference type="PROSITE" id="PS01181">
    <property type="entry name" value="RIBOSOMAL_S21"/>
    <property type="match status" value="1"/>
</dbReference>
<protein>
    <recommendedName>
        <fullName evidence="1">Small ribosomal subunit protein bS21</fullName>
    </recommendedName>
    <alternativeName>
        <fullName evidence="2">30S ribosomal protein S21</fullName>
    </alternativeName>
</protein>
<comment type="similarity">
    <text evidence="1">Belongs to the bacterial ribosomal protein bS21 family.</text>
</comment>
<proteinExistence type="inferred from homology"/>
<reference key="1">
    <citation type="journal article" date="2008" name="PLoS ONE">
        <title>Environmental adaptation: genomic analysis of the piezotolerant and psychrotolerant deep-sea iron reducing bacterium Shewanella piezotolerans WP3.</title>
        <authorList>
            <person name="Wang F."/>
            <person name="Wang J."/>
            <person name="Jian H."/>
            <person name="Zhang B."/>
            <person name="Li S."/>
            <person name="Wang F."/>
            <person name="Zeng X."/>
            <person name="Gao L."/>
            <person name="Bartlett D.H."/>
            <person name="Yu J."/>
            <person name="Hu S."/>
            <person name="Xiao X."/>
        </authorList>
    </citation>
    <scope>NUCLEOTIDE SEQUENCE [LARGE SCALE GENOMIC DNA]</scope>
    <source>
        <strain>WP3 / JCM 13877</strain>
    </source>
</reference>
<accession>B8CJF0</accession>
<sequence>MPIIKVRENEPFDVALRRFKRSCEKAGILADVRAREFYEKPTTARKRAKAAAIKRLAKKLSRENARRVRLY</sequence>
<evidence type="ECO:0000255" key="1">
    <source>
        <dbReference type="HAMAP-Rule" id="MF_00358"/>
    </source>
</evidence>
<evidence type="ECO:0000305" key="2"/>
<organism>
    <name type="scientific">Shewanella piezotolerans (strain WP3 / JCM 13877)</name>
    <dbReference type="NCBI Taxonomy" id="225849"/>
    <lineage>
        <taxon>Bacteria</taxon>
        <taxon>Pseudomonadati</taxon>
        <taxon>Pseudomonadota</taxon>
        <taxon>Gammaproteobacteria</taxon>
        <taxon>Alteromonadales</taxon>
        <taxon>Shewanellaceae</taxon>
        <taxon>Shewanella</taxon>
    </lineage>
</organism>
<name>RS21_SHEPW</name>
<gene>
    <name evidence="1" type="primary">rpsU</name>
    <name type="ordered locus">swp_1114</name>
</gene>